<gene>
    <name evidence="1" type="primary">argG</name>
    <name type="ordered locus">Bamb_5452</name>
</gene>
<name>ASSY_BURCM</name>
<evidence type="ECO:0000255" key="1">
    <source>
        <dbReference type="HAMAP-Rule" id="MF_00581"/>
    </source>
</evidence>
<proteinExistence type="inferred from homology"/>
<reference key="1">
    <citation type="submission" date="2006-08" db="EMBL/GenBank/DDBJ databases">
        <title>Complete sequence of chromosome 2 of Burkholderia cepacia AMMD.</title>
        <authorList>
            <person name="Copeland A."/>
            <person name="Lucas S."/>
            <person name="Lapidus A."/>
            <person name="Barry K."/>
            <person name="Detter J.C."/>
            <person name="Glavina del Rio T."/>
            <person name="Hammon N."/>
            <person name="Israni S."/>
            <person name="Pitluck S."/>
            <person name="Bruce D."/>
            <person name="Chain P."/>
            <person name="Malfatti S."/>
            <person name="Shin M."/>
            <person name="Vergez L."/>
            <person name="Schmutz J."/>
            <person name="Larimer F."/>
            <person name="Land M."/>
            <person name="Hauser L."/>
            <person name="Kyrpides N."/>
            <person name="Kim E."/>
            <person name="Parke J."/>
            <person name="Coenye T."/>
            <person name="Konstantinidis K."/>
            <person name="Ramette A."/>
            <person name="Tiedje J."/>
            <person name="Richardson P."/>
        </authorList>
    </citation>
    <scope>NUCLEOTIDE SEQUENCE [LARGE SCALE GENOMIC DNA]</scope>
    <source>
        <strain>ATCC BAA-244 / DSM 16087 / CCUG 44356 / LMG 19182 / AMMD</strain>
    </source>
</reference>
<dbReference type="EC" id="6.3.4.5" evidence="1"/>
<dbReference type="EMBL" id="CP000441">
    <property type="protein sequence ID" value="ABI90999.1"/>
    <property type="molecule type" value="Genomic_DNA"/>
</dbReference>
<dbReference type="RefSeq" id="WP_011660368.1">
    <property type="nucleotide sequence ID" value="NC_008391.1"/>
</dbReference>
<dbReference type="SMR" id="Q0B4C4"/>
<dbReference type="GeneID" id="93088361"/>
<dbReference type="KEGG" id="bam:Bamb_5452"/>
<dbReference type="PATRIC" id="fig|339670.21.peg.5865"/>
<dbReference type="eggNOG" id="COG0137">
    <property type="taxonomic scope" value="Bacteria"/>
</dbReference>
<dbReference type="UniPathway" id="UPA00068">
    <property type="reaction ID" value="UER00113"/>
</dbReference>
<dbReference type="Proteomes" id="UP000000662">
    <property type="component" value="Chromosome 2"/>
</dbReference>
<dbReference type="GO" id="GO:0005737">
    <property type="term" value="C:cytoplasm"/>
    <property type="evidence" value="ECO:0007669"/>
    <property type="project" value="UniProtKB-SubCell"/>
</dbReference>
<dbReference type="GO" id="GO:0004055">
    <property type="term" value="F:argininosuccinate synthase activity"/>
    <property type="evidence" value="ECO:0007669"/>
    <property type="project" value="UniProtKB-UniRule"/>
</dbReference>
<dbReference type="GO" id="GO:0005524">
    <property type="term" value="F:ATP binding"/>
    <property type="evidence" value="ECO:0007669"/>
    <property type="project" value="UniProtKB-UniRule"/>
</dbReference>
<dbReference type="GO" id="GO:0042803">
    <property type="term" value="F:protein homodimerization activity"/>
    <property type="evidence" value="ECO:0007669"/>
    <property type="project" value="InterPro"/>
</dbReference>
<dbReference type="GO" id="GO:0000053">
    <property type="term" value="P:argininosuccinate metabolic process"/>
    <property type="evidence" value="ECO:0007669"/>
    <property type="project" value="TreeGrafter"/>
</dbReference>
<dbReference type="GO" id="GO:0006526">
    <property type="term" value="P:L-arginine biosynthetic process"/>
    <property type="evidence" value="ECO:0007669"/>
    <property type="project" value="UniProtKB-UniRule"/>
</dbReference>
<dbReference type="GO" id="GO:0000050">
    <property type="term" value="P:urea cycle"/>
    <property type="evidence" value="ECO:0007669"/>
    <property type="project" value="TreeGrafter"/>
</dbReference>
<dbReference type="CDD" id="cd01999">
    <property type="entry name" value="ASS"/>
    <property type="match status" value="1"/>
</dbReference>
<dbReference type="FunFam" id="1.10.287.400:FF:000001">
    <property type="entry name" value="Argininosuccinate synthase"/>
    <property type="match status" value="1"/>
</dbReference>
<dbReference type="Gene3D" id="1.10.287.400">
    <property type="match status" value="1"/>
</dbReference>
<dbReference type="Gene3D" id="3.90.1260.10">
    <property type="entry name" value="Argininosuccinate synthetase, chain A, domain 2"/>
    <property type="match status" value="1"/>
</dbReference>
<dbReference type="Gene3D" id="3.40.50.620">
    <property type="entry name" value="HUPs"/>
    <property type="match status" value="1"/>
</dbReference>
<dbReference type="HAMAP" id="MF_00581">
    <property type="entry name" value="Arg_succ_synth_type2"/>
    <property type="match status" value="1"/>
</dbReference>
<dbReference type="InterPro" id="IPR023437">
    <property type="entry name" value="Arg_succ_synth_type2_subfam"/>
</dbReference>
<dbReference type="InterPro" id="IPR048268">
    <property type="entry name" value="Arginosuc_syn_C"/>
</dbReference>
<dbReference type="InterPro" id="IPR048267">
    <property type="entry name" value="Arginosuc_syn_N"/>
</dbReference>
<dbReference type="InterPro" id="IPR001518">
    <property type="entry name" value="Arginosuc_synth"/>
</dbReference>
<dbReference type="InterPro" id="IPR018223">
    <property type="entry name" value="Arginosuc_synth_CS"/>
</dbReference>
<dbReference type="InterPro" id="IPR023434">
    <property type="entry name" value="Arginosuc_synth_type_1_subfam"/>
</dbReference>
<dbReference type="InterPro" id="IPR024074">
    <property type="entry name" value="AS_cat/multimer_dom_body"/>
</dbReference>
<dbReference type="InterPro" id="IPR024073">
    <property type="entry name" value="AS_multimer_C_tail"/>
</dbReference>
<dbReference type="InterPro" id="IPR014729">
    <property type="entry name" value="Rossmann-like_a/b/a_fold"/>
</dbReference>
<dbReference type="NCBIfam" id="TIGR00032">
    <property type="entry name" value="argG"/>
    <property type="match status" value="1"/>
</dbReference>
<dbReference type="NCBIfam" id="NF003779">
    <property type="entry name" value="PRK05370.1"/>
    <property type="match status" value="1"/>
</dbReference>
<dbReference type="PANTHER" id="PTHR11587">
    <property type="entry name" value="ARGININOSUCCINATE SYNTHASE"/>
    <property type="match status" value="1"/>
</dbReference>
<dbReference type="PANTHER" id="PTHR11587:SF2">
    <property type="entry name" value="ARGININOSUCCINATE SYNTHASE"/>
    <property type="match status" value="1"/>
</dbReference>
<dbReference type="Pfam" id="PF20979">
    <property type="entry name" value="Arginosuc_syn_C"/>
    <property type="match status" value="1"/>
</dbReference>
<dbReference type="Pfam" id="PF00764">
    <property type="entry name" value="Arginosuc_synth"/>
    <property type="match status" value="1"/>
</dbReference>
<dbReference type="SUPFAM" id="SSF52402">
    <property type="entry name" value="Adenine nucleotide alpha hydrolases-like"/>
    <property type="match status" value="1"/>
</dbReference>
<dbReference type="SUPFAM" id="SSF69864">
    <property type="entry name" value="Argininosuccinate synthetase, C-terminal domain"/>
    <property type="match status" value="1"/>
</dbReference>
<dbReference type="PROSITE" id="PS00564">
    <property type="entry name" value="ARGININOSUCCIN_SYN_1"/>
    <property type="match status" value="1"/>
</dbReference>
<dbReference type="PROSITE" id="PS00565">
    <property type="entry name" value="ARGININOSUCCIN_SYN_2"/>
    <property type="match status" value="1"/>
</dbReference>
<protein>
    <recommendedName>
        <fullName evidence="1">Argininosuccinate synthase</fullName>
        <ecNumber evidence="1">6.3.4.5</ecNumber>
    </recommendedName>
    <alternativeName>
        <fullName evidence="1">Citrulline--aspartate ligase</fullName>
    </alternativeName>
</protein>
<sequence>MSTILESLPTGQKVGIAFSGGLDTSAALHWMKLKGAVPYAYTANLGQPDEDDYDAIPKRAIEYGAAGARLIDCRAQLVAEGIAALQSGAFHITTAGVTYFNTTPIGRAVTGTMLVAAMKEDGVNIWGDGSTYKGNDIERFYRYGLLVNPDLKIYKPWLDQTFIDELGGRAEMSEFMNQAGFAYKMSAEKAYSTDSNLLGATHEAKDLESLESGIKIVNPIMGVAFWRDDVKIAAEEVTVRFEAGQPVALNGVEYKDPVELLLEANRIGGRHGLGMSDQIENRIIEAKSRGIYEAPGLALLYIAYERLVTGIHNEDTIEQYRENGRRLGRLLYQGRWFDPQAIMLRETAQRWVARAITGEVKIELRRGNDYSILSTKSPNLTYQPERLSMEKVASTFSPRDRIGQLTMRNLDITDTRDKLRVYSQVGLLTPGESSALPQIKGDSDK</sequence>
<keyword id="KW-0028">Amino-acid biosynthesis</keyword>
<keyword id="KW-0055">Arginine biosynthesis</keyword>
<keyword id="KW-0067">ATP-binding</keyword>
<keyword id="KW-0963">Cytoplasm</keyword>
<keyword id="KW-0436">Ligase</keyword>
<keyword id="KW-0547">Nucleotide-binding</keyword>
<accession>Q0B4C4</accession>
<feature type="chain" id="PRO_1000129741" description="Argininosuccinate synthase">
    <location>
        <begin position="1"/>
        <end position="445"/>
    </location>
</feature>
<feature type="binding site" evidence="1">
    <location>
        <begin position="17"/>
        <end position="25"/>
    </location>
    <ligand>
        <name>ATP</name>
        <dbReference type="ChEBI" id="CHEBI:30616"/>
    </ligand>
</feature>
<feature type="binding site" evidence="1">
    <location>
        <position position="43"/>
    </location>
    <ligand>
        <name>ATP</name>
        <dbReference type="ChEBI" id="CHEBI:30616"/>
    </ligand>
</feature>
<feature type="binding site" evidence="1">
    <location>
        <position position="99"/>
    </location>
    <ligand>
        <name>L-citrulline</name>
        <dbReference type="ChEBI" id="CHEBI:57743"/>
    </ligand>
</feature>
<feature type="binding site" evidence="1">
    <location>
        <position position="129"/>
    </location>
    <ligand>
        <name>ATP</name>
        <dbReference type="ChEBI" id="CHEBI:30616"/>
    </ligand>
</feature>
<feature type="binding site" evidence="1">
    <location>
        <position position="131"/>
    </location>
    <ligand>
        <name>ATP</name>
        <dbReference type="ChEBI" id="CHEBI:30616"/>
    </ligand>
</feature>
<feature type="binding site" evidence="1">
    <location>
        <position position="131"/>
    </location>
    <ligand>
        <name>L-aspartate</name>
        <dbReference type="ChEBI" id="CHEBI:29991"/>
    </ligand>
</feature>
<feature type="binding site" evidence="1">
    <location>
        <position position="135"/>
    </location>
    <ligand>
        <name>L-aspartate</name>
        <dbReference type="ChEBI" id="CHEBI:29991"/>
    </ligand>
</feature>
<feature type="binding site" evidence="1">
    <location>
        <position position="135"/>
    </location>
    <ligand>
        <name>L-citrulline</name>
        <dbReference type="ChEBI" id="CHEBI:57743"/>
    </ligand>
</feature>
<feature type="binding site" evidence="1">
    <location>
        <position position="136"/>
    </location>
    <ligand>
        <name>ATP</name>
        <dbReference type="ChEBI" id="CHEBI:30616"/>
    </ligand>
</feature>
<feature type="binding site" evidence="1">
    <location>
        <position position="136"/>
    </location>
    <ligand>
        <name>L-aspartate</name>
        <dbReference type="ChEBI" id="CHEBI:29991"/>
    </ligand>
</feature>
<feature type="binding site" evidence="1">
    <location>
        <position position="139"/>
    </location>
    <ligand>
        <name>L-citrulline</name>
        <dbReference type="ChEBI" id="CHEBI:57743"/>
    </ligand>
</feature>
<feature type="binding site" evidence="1">
    <location>
        <position position="192"/>
    </location>
    <ligand>
        <name>L-citrulline</name>
        <dbReference type="ChEBI" id="CHEBI:57743"/>
    </ligand>
</feature>
<feature type="binding site" evidence="1">
    <location>
        <position position="194"/>
    </location>
    <ligand>
        <name>ATP</name>
        <dbReference type="ChEBI" id="CHEBI:30616"/>
    </ligand>
</feature>
<feature type="binding site" evidence="1">
    <location>
        <position position="201"/>
    </location>
    <ligand>
        <name>L-citrulline</name>
        <dbReference type="ChEBI" id="CHEBI:57743"/>
    </ligand>
</feature>
<feature type="binding site" evidence="1">
    <location>
        <position position="203"/>
    </location>
    <ligand>
        <name>L-citrulline</name>
        <dbReference type="ChEBI" id="CHEBI:57743"/>
    </ligand>
</feature>
<feature type="binding site" evidence="1">
    <location>
        <position position="280"/>
    </location>
    <ligand>
        <name>L-citrulline</name>
        <dbReference type="ChEBI" id="CHEBI:57743"/>
    </ligand>
</feature>
<organism>
    <name type="scientific">Burkholderia ambifaria (strain ATCC BAA-244 / DSM 16087 / CCUG 44356 / LMG 19182 / AMMD)</name>
    <name type="common">Burkholderia cepacia (strain AMMD)</name>
    <dbReference type="NCBI Taxonomy" id="339670"/>
    <lineage>
        <taxon>Bacteria</taxon>
        <taxon>Pseudomonadati</taxon>
        <taxon>Pseudomonadota</taxon>
        <taxon>Betaproteobacteria</taxon>
        <taxon>Burkholderiales</taxon>
        <taxon>Burkholderiaceae</taxon>
        <taxon>Burkholderia</taxon>
        <taxon>Burkholderia cepacia complex</taxon>
    </lineage>
</organism>
<comment type="catalytic activity">
    <reaction evidence="1">
        <text>L-citrulline + L-aspartate + ATP = 2-(N(omega)-L-arginino)succinate + AMP + diphosphate + H(+)</text>
        <dbReference type="Rhea" id="RHEA:10932"/>
        <dbReference type="ChEBI" id="CHEBI:15378"/>
        <dbReference type="ChEBI" id="CHEBI:29991"/>
        <dbReference type="ChEBI" id="CHEBI:30616"/>
        <dbReference type="ChEBI" id="CHEBI:33019"/>
        <dbReference type="ChEBI" id="CHEBI:57472"/>
        <dbReference type="ChEBI" id="CHEBI:57743"/>
        <dbReference type="ChEBI" id="CHEBI:456215"/>
        <dbReference type="EC" id="6.3.4.5"/>
    </reaction>
</comment>
<comment type="pathway">
    <text evidence="1">Amino-acid biosynthesis; L-arginine biosynthesis; L-arginine from L-ornithine and carbamoyl phosphate: step 2/3.</text>
</comment>
<comment type="subunit">
    <text evidence="1">Homotetramer.</text>
</comment>
<comment type="subcellular location">
    <subcellularLocation>
        <location evidence="1">Cytoplasm</location>
    </subcellularLocation>
</comment>
<comment type="similarity">
    <text evidence="1">Belongs to the argininosuccinate synthase family. Type 2 subfamily.</text>
</comment>